<gene>
    <name type="primary">GJD2</name>
    <name type="synonym">GJA9</name>
</gene>
<dbReference type="EMBL" id="AF153047">
    <property type="protein sequence ID" value="AAD54234.1"/>
    <property type="molecule type" value="Genomic_DNA"/>
</dbReference>
<dbReference type="EMBL" id="BC069339">
    <property type="protein sequence ID" value="AAH69339.1"/>
    <property type="molecule type" value="mRNA"/>
</dbReference>
<dbReference type="EMBL" id="BC112110">
    <property type="protein sequence ID" value="AAI12111.1"/>
    <property type="molecule type" value="mRNA"/>
</dbReference>
<dbReference type="EMBL" id="BC112114">
    <property type="protein sequence ID" value="AAI12115.1"/>
    <property type="molecule type" value="mRNA"/>
</dbReference>
<dbReference type="EMBL" id="AB037509">
    <property type="protein sequence ID" value="BAA90429.1"/>
    <property type="molecule type" value="Genomic_DNA"/>
</dbReference>
<dbReference type="CCDS" id="CCDS10040.1"/>
<dbReference type="RefSeq" id="NP_065711.1">
    <property type="nucleotide sequence ID" value="NM_020660.3"/>
</dbReference>
<dbReference type="PDB" id="2N6A">
    <property type="method" value="NMR"/>
    <property type="chains" value="A=276-292"/>
</dbReference>
<dbReference type="PDB" id="7XKI">
    <property type="method" value="EM"/>
    <property type="resolution" value="3.40 A"/>
    <property type="chains" value="A/B/C/D/E/F/G/H/I/J/K/L=16-108, A/B/C/D/E/F/G/H/I/J/K/L=188-321"/>
</dbReference>
<dbReference type="PDB" id="7XKK">
    <property type="method" value="EM"/>
    <property type="resolution" value="3.20 A"/>
    <property type="chains" value="A/B/C/D/E/F/G/H/I/J/K/L=1-321"/>
</dbReference>
<dbReference type="PDB" id="7XKT">
    <property type="method" value="EM"/>
    <property type="resolution" value="2.20 A"/>
    <property type="chains" value="A/B/C/D/E/F/G/H/I/J/K/L=1-108, A/B/C/D/E/F/G/H/I/J/K/L=188-321"/>
</dbReference>
<dbReference type="PDB" id="7XL8">
    <property type="method" value="EM"/>
    <property type="resolution" value="3.00 A"/>
    <property type="chains" value="A/B/C/D/E/F/G/H/I/J/K/L=9-321"/>
</dbReference>
<dbReference type="PDB" id="7XNH">
    <property type="method" value="EM"/>
    <property type="resolution" value="3.10 A"/>
    <property type="chains" value="A/B/C/D/E/F/G/H/I/J/K/L=1-321"/>
</dbReference>
<dbReference type="PDB" id="7XNV">
    <property type="method" value="EM"/>
    <property type="resolution" value="3.40 A"/>
    <property type="chains" value="A/B/C/D/E/F/G/H/I/J/K/L=1-321"/>
</dbReference>
<dbReference type="PDB" id="8HKP">
    <property type="method" value="EM"/>
    <property type="resolution" value="3.60 A"/>
    <property type="chains" value="A/B/C/D/E/F/G/H/I/J/K/L=1-321"/>
</dbReference>
<dbReference type="PDB" id="8IYG">
    <property type="method" value="EM"/>
    <property type="resolution" value="2.69 A"/>
    <property type="chains" value="A/B/C/D/E/F/G/H/I/J/K/L=1-321"/>
</dbReference>
<dbReference type="PDB" id="8QOJ">
    <property type="method" value="EM"/>
    <property type="resolution" value="2.13 A"/>
    <property type="chains" value="A/B/C/D/E/F/G/H/I/J/K/L=1-321"/>
</dbReference>
<dbReference type="PDB" id="8R7P">
    <property type="method" value="EM"/>
    <property type="resolution" value="2.53 A"/>
    <property type="chains" value="A/B/C/D/E/F/G/H/I/J/K/L=1-321"/>
</dbReference>
<dbReference type="PDB" id="8R7Q">
    <property type="method" value="EM"/>
    <property type="resolution" value="2.78 A"/>
    <property type="chains" value="A/B/C/D/E/F/G/H/I/J/K/L=1-321"/>
</dbReference>
<dbReference type="PDB" id="8R7R">
    <property type="method" value="EM"/>
    <property type="resolution" value="2.97 A"/>
    <property type="chains" value="A/B/C/D/E/F/G/H/I/J/K/L=1-321"/>
</dbReference>
<dbReference type="PDB" id="8XGD">
    <property type="method" value="EM"/>
    <property type="resolution" value="2.50 A"/>
    <property type="chains" value="A/B/C/D/E/F/G/H/I/J/K/L=1-321"/>
</dbReference>
<dbReference type="PDB" id="8XGE">
    <property type="method" value="EM"/>
    <property type="resolution" value="2.89 A"/>
    <property type="chains" value="A/B/C/D/E/F/G/H/I/J/K/L=1-321"/>
</dbReference>
<dbReference type="PDB" id="8XGF">
    <property type="method" value="EM"/>
    <property type="resolution" value="2.95 A"/>
    <property type="chains" value="A/B/C/D/E/F/G/H/I/J/K/L=1-321"/>
</dbReference>
<dbReference type="PDB" id="8XGG">
    <property type="method" value="EM"/>
    <property type="resolution" value="3.20 A"/>
    <property type="chains" value="A/B/C/D/E/F/G/H/I/J/K/L=1-321"/>
</dbReference>
<dbReference type="PDB" id="8XGJ">
    <property type="method" value="EM"/>
    <property type="resolution" value="2.70 A"/>
    <property type="chains" value="A/B/C/D/E/F/G/H/I/J/K/L=1-321"/>
</dbReference>
<dbReference type="PDB" id="8XH8">
    <property type="method" value="EM"/>
    <property type="resolution" value="2.72 A"/>
    <property type="chains" value="A/B/C/D/E/F/G/H/I/J/K/L=1-321"/>
</dbReference>
<dbReference type="PDB" id="8XH9">
    <property type="method" value="EM"/>
    <property type="resolution" value="2.58 A"/>
    <property type="chains" value="A/B/C/D/E/F/G/H/I/J/K/L=1-321"/>
</dbReference>
<dbReference type="PDBsum" id="2N6A"/>
<dbReference type="PDBsum" id="7XKI"/>
<dbReference type="PDBsum" id="7XKK"/>
<dbReference type="PDBsum" id="7XKT"/>
<dbReference type="PDBsum" id="7XL8"/>
<dbReference type="PDBsum" id="7XNH"/>
<dbReference type="PDBsum" id="7XNV"/>
<dbReference type="PDBsum" id="8HKP"/>
<dbReference type="PDBsum" id="8IYG"/>
<dbReference type="PDBsum" id="8QOJ"/>
<dbReference type="PDBsum" id="8R7P"/>
<dbReference type="PDBsum" id="8R7Q"/>
<dbReference type="PDBsum" id="8R7R"/>
<dbReference type="PDBsum" id="8XGD"/>
<dbReference type="PDBsum" id="8XGE"/>
<dbReference type="PDBsum" id="8XGF"/>
<dbReference type="PDBsum" id="8XGG"/>
<dbReference type="PDBsum" id="8XGJ"/>
<dbReference type="PDBsum" id="8XH8"/>
<dbReference type="PDBsum" id="8XH9"/>
<dbReference type="EMDB" id="EMD-18540"/>
<dbReference type="EMDB" id="EMD-18987"/>
<dbReference type="EMDB" id="EMD-18988"/>
<dbReference type="EMDB" id="EMD-18989"/>
<dbReference type="EMDB" id="EMD-33254"/>
<dbReference type="EMDB" id="EMD-33256"/>
<dbReference type="EMDB" id="EMD-33270"/>
<dbReference type="EMDB" id="EMD-33274"/>
<dbReference type="EMDB" id="EMD-33315"/>
<dbReference type="EMDB" id="EMD-33327"/>
<dbReference type="EMDB" id="EMD-34856"/>
<dbReference type="EMDB" id="EMD-35821"/>
<dbReference type="EMDB" id="EMD-38318"/>
<dbReference type="EMDB" id="EMD-38319"/>
<dbReference type="EMDB" id="EMD-38320"/>
<dbReference type="EMDB" id="EMD-38322"/>
<dbReference type="EMDB" id="EMD-38327"/>
<dbReference type="EMDB" id="EMD-38344"/>
<dbReference type="EMDB" id="EMD-38345"/>
<dbReference type="SMR" id="Q9UKL4"/>
<dbReference type="BioGRID" id="121496">
    <property type="interactions" value="4"/>
</dbReference>
<dbReference type="FunCoup" id="Q9UKL4">
    <property type="interactions" value="404"/>
</dbReference>
<dbReference type="STRING" id="9606.ENSP00000290374"/>
<dbReference type="TCDB" id="1.A.24.1.13">
    <property type="family name" value="the gap junction-forming connexin (connexin) family"/>
</dbReference>
<dbReference type="iPTMnet" id="Q9UKL4"/>
<dbReference type="PhosphoSitePlus" id="Q9UKL4"/>
<dbReference type="BioMuta" id="GJD2"/>
<dbReference type="DMDM" id="8928073"/>
<dbReference type="MassIVE" id="Q9UKL4"/>
<dbReference type="PaxDb" id="9606-ENSP00000290374"/>
<dbReference type="PeptideAtlas" id="Q9UKL4"/>
<dbReference type="ProteomicsDB" id="84817"/>
<dbReference type="Antibodypedia" id="9771">
    <property type="antibodies" value="266 antibodies from 29 providers"/>
</dbReference>
<dbReference type="DNASU" id="57369"/>
<dbReference type="Ensembl" id="ENST00000290374.5">
    <property type="protein sequence ID" value="ENSP00000290374.4"/>
    <property type="gene ID" value="ENSG00000159248.5"/>
</dbReference>
<dbReference type="GeneID" id="57369"/>
<dbReference type="KEGG" id="hsa:57369"/>
<dbReference type="MANE-Select" id="ENST00000290374.5">
    <property type="protein sequence ID" value="ENSP00000290374.4"/>
    <property type="RefSeq nucleotide sequence ID" value="NM_020660.3"/>
    <property type="RefSeq protein sequence ID" value="NP_065711.1"/>
</dbReference>
<dbReference type="UCSC" id="uc001zis.3">
    <property type="organism name" value="human"/>
</dbReference>
<dbReference type="AGR" id="HGNC:19154"/>
<dbReference type="CTD" id="57369"/>
<dbReference type="DisGeNET" id="57369"/>
<dbReference type="GeneCards" id="GJD2"/>
<dbReference type="HGNC" id="HGNC:19154">
    <property type="gene designation" value="GJD2"/>
</dbReference>
<dbReference type="HPA" id="ENSG00000159248">
    <property type="expression patterns" value="Tissue enhanced (adrenal gland, pituitary gland, retina)"/>
</dbReference>
<dbReference type="MIM" id="607058">
    <property type="type" value="gene"/>
</dbReference>
<dbReference type="neXtProt" id="NX_Q9UKL4"/>
<dbReference type="OpenTargets" id="ENSG00000159248"/>
<dbReference type="PharmGKB" id="PA162389706"/>
<dbReference type="VEuPathDB" id="HostDB:ENSG00000159248"/>
<dbReference type="eggNOG" id="ENOG502QV4X">
    <property type="taxonomic scope" value="Eukaryota"/>
</dbReference>
<dbReference type="GeneTree" id="ENSGT01130000278276"/>
<dbReference type="HOGENOM" id="CLU_037388_4_0_1"/>
<dbReference type="InParanoid" id="Q9UKL4"/>
<dbReference type="OMA" id="KEMEPDC"/>
<dbReference type="OrthoDB" id="10012477at2759"/>
<dbReference type="PAN-GO" id="Q9UKL4">
    <property type="GO annotations" value="3 GO annotations based on evolutionary models"/>
</dbReference>
<dbReference type="PhylomeDB" id="Q9UKL4"/>
<dbReference type="TreeFam" id="TF329606"/>
<dbReference type="PathwayCommons" id="Q9UKL4"/>
<dbReference type="Reactome" id="R-HSA-112303">
    <property type="pathway name" value="Electric Transmission Across Gap Junctions"/>
</dbReference>
<dbReference type="Reactome" id="R-HSA-190861">
    <property type="pathway name" value="Gap junction assembly"/>
</dbReference>
<dbReference type="BioGRID-ORCS" id="57369">
    <property type="hits" value="13 hits in 1143 CRISPR screens"/>
</dbReference>
<dbReference type="EvolutionaryTrace" id="Q9UKL4"/>
<dbReference type="GeneWiki" id="GJD2"/>
<dbReference type="GenomeRNAi" id="57369"/>
<dbReference type="Pharos" id="Q9UKL4">
    <property type="development level" value="Tbio"/>
</dbReference>
<dbReference type="PRO" id="PR:Q9UKL4"/>
<dbReference type="Proteomes" id="UP000005640">
    <property type="component" value="Chromosome 15"/>
</dbReference>
<dbReference type="RNAct" id="Q9UKL4">
    <property type="molecule type" value="protein"/>
</dbReference>
<dbReference type="Bgee" id="ENSG00000159248">
    <property type="expression patterns" value="Expressed in islet of Langerhans and 71 other cell types or tissues"/>
</dbReference>
<dbReference type="GO" id="GO:0005922">
    <property type="term" value="C:connexin complex"/>
    <property type="evidence" value="ECO:0000318"/>
    <property type="project" value="GO_Central"/>
</dbReference>
<dbReference type="GO" id="GO:0005886">
    <property type="term" value="C:plasma membrane"/>
    <property type="evidence" value="ECO:0000304"/>
    <property type="project" value="Reactome"/>
</dbReference>
<dbReference type="GO" id="GO:0045202">
    <property type="term" value="C:synapse"/>
    <property type="evidence" value="ECO:0007669"/>
    <property type="project" value="GOC"/>
</dbReference>
<dbReference type="GO" id="GO:0005243">
    <property type="term" value="F:gap junction channel activity"/>
    <property type="evidence" value="ECO:0000318"/>
    <property type="project" value="GO_Central"/>
</dbReference>
<dbReference type="GO" id="GO:0007267">
    <property type="term" value="P:cell-cell signaling"/>
    <property type="evidence" value="ECO:0000318"/>
    <property type="project" value="GO_Central"/>
</dbReference>
<dbReference type="GO" id="GO:0007268">
    <property type="term" value="P:chemical synaptic transmission"/>
    <property type="evidence" value="ECO:0007669"/>
    <property type="project" value="Ensembl"/>
</dbReference>
<dbReference type="GO" id="GO:0019228">
    <property type="term" value="P:neuronal action potential"/>
    <property type="evidence" value="ECO:0007669"/>
    <property type="project" value="Ensembl"/>
</dbReference>
<dbReference type="GO" id="GO:0007601">
    <property type="term" value="P:visual perception"/>
    <property type="evidence" value="ECO:0007669"/>
    <property type="project" value="Ensembl"/>
</dbReference>
<dbReference type="FunFam" id="1.20.1440.80:FF:000003">
    <property type="entry name" value="Gap junction protein"/>
    <property type="match status" value="1"/>
</dbReference>
<dbReference type="Gene3D" id="1.20.1440.80">
    <property type="entry name" value="Gap junction channel protein cysteine-rich domain"/>
    <property type="match status" value="1"/>
</dbReference>
<dbReference type="InterPro" id="IPR000500">
    <property type="entry name" value="Connexin"/>
</dbReference>
<dbReference type="InterPro" id="IPR002260">
    <property type="entry name" value="Connexin36"/>
</dbReference>
<dbReference type="InterPro" id="IPR019570">
    <property type="entry name" value="Connexin_CCC"/>
</dbReference>
<dbReference type="InterPro" id="IPR017990">
    <property type="entry name" value="Connexin_CS"/>
</dbReference>
<dbReference type="InterPro" id="IPR013092">
    <property type="entry name" value="Connexin_N"/>
</dbReference>
<dbReference type="InterPro" id="IPR038359">
    <property type="entry name" value="Connexin_N_sf"/>
</dbReference>
<dbReference type="PANTHER" id="PTHR11984">
    <property type="entry name" value="CONNEXIN"/>
    <property type="match status" value="1"/>
</dbReference>
<dbReference type="PANTHER" id="PTHR11984:SF32">
    <property type="entry name" value="GAP JUNCTION DELTA-2 PROTEIN"/>
    <property type="match status" value="1"/>
</dbReference>
<dbReference type="Pfam" id="PF00029">
    <property type="entry name" value="Connexin"/>
    <property type="match status" value="1"/>
</dbReference>
<dbReference type="PRINTS" id="PR00206">
    <property type="entry name" value="CONNEXIN"/>
</dbReference>
<dbReference type="PRINTS" id="PR01131">
    <property type="entry name" value="CONNEXIN36"/>
</dbReference>
<dbReference type="SMART" id="SM00037">
    <property type="entry name" value="CNX"/>
    <property type="match status" value="1"/>
</dbReference>
<dbReference type="SMART" id="SM01089">
    <property type="entry name" value="Connexin_CCC"/>
    <property type="match status" value="1"/>
</dbReference>
<dbReference type="PROSITE" id="PS00407">
    <property type="entry name" value="CONNEXINS_1"/>
    <property type="match status" value="1"/>
</dbReference>
<dbReference type="PROSITE" id="PS00408">
    <property type="entry name" value="CONNEXINS_2"/>
    <property type="match status" value="1"/>
</dbReference>
<name>CXD2_HUMAN</name>
<sequence length="321" mass="36093">MGEWTILERLLEAAVQQHSTMIGRILLTVVVIFRILIVAIVGETVYDDEQTMFVCNTLQPGCNQACYDRAFPISHIRYWVFQIIMVCTPSLCFITYSVHQSAKQRERRYSTVFLALDRDPPESIGGPGGTGGGGSGGGKREDKKLQNAIVNGVLQNTENTSKETEPDCLEVKELTPHPSGLRTASKSKLRRQEGISRFYIIQVVFRNALEIGFLVGQYFLYGFSVPGLYECNRYPCIKEVECYVSRPTEKTVFLVFMFAVSGICVVLNLAELNHLGWRKIKLAVRGAQAKRKSIYEIRNKDLPRVSVPNFGRTQSSDSAYV</sequence>
<keyword id="KW-0002">3D-structure</keyword>
<keyword id="KW-0965">Cell junction</keyword>
<keyword id="KW-1003">Cell membrane</keyword>
<keyword id="KW-0303">Gap junction</keyword>
<keyword id="KW-0472">Membrane</keyword>
<keyword id="KW-1267">Proteomics identification</keyword>
<keyword id="KW-1185">Reference proteome</keyword>
<keyword id="KW-0812">Transmembrane</keyword>
<keyword id="KW-1133">Transmembrane helix</keyword>
<evidence type="ECO:0000255" key="1"/>
<evidence type="ECO:0000256" key="2">
    <source>
        <dbReference type="SAM" id="MobiDB-lite"/>
    </source>
</evidence>
<evidence type="ECO:0000305" key="3"/>
<evidence type="ECO:0007829" key="4">
    <source>
        <dbReference type="PDB" id="8IYG"/>
    </source>
</evidence>
<evidence type="ECO:0007829" key="5">
    <source>
        <dbReference type="PDB" id="8QOJ"/>
    </source>
</evidence>
<evidence type="ECO:0007829" key="6">
    <source>
        <dbReference type="PDB" id="8XGD"/>
    </source>
</evidence>
<comment type="function">
    <text>One gap junction consists of a cluster of closely packed pairs of transmembrane channels, the connexons, through which materials of low MW diffuse from one cell to a neighboring cell.</text>
</comment>
<comment type="subunit">
    <text>A connexon is composed of a hexamer of connexins.</text>
</comment>
<comment type="subcellular location">
    <subcellularLocation>
        <location>Cell membrane</location>
        <topology>Multi-pass membrane protein</topology>
    </subcellularLocation>
    <subcellularLocation>
        <location>Cell junction</location>
        <location>Gap junction</location>
    </subcellularLocation>
</comment>
<comment type="tissue specificity">
    <text>Highly expressed in neurons.</text>
</comment>
<comment type="similarity">
    <text evidence="3">Belongs to the connexin family. Delta-type subfamily.</text>
</comment>
<feature type="chain" id="PRO_0000057835" description="Gap junction delta-2 protein">
    <location>
        <begin position="1"/>
        <end position="321"/>
    </location>
</feature>
<feature type="topological domain" description="Cytoplasmic" evidence="1">
    <location>
        <begin position="1"/>
        <end position="19"/>
    </location>
</feature>
<feature type="transmembrane region" description="Helical" evidence="1">
    <location>
        <begin position="20"/>
        <end position="42"/>
    </location>
</feature>
<feature type="topological domain" description="Extracellular" evidence="1">
    <location>
        <begin position="43"/>
        <end position="75"/>
    </location>
</feature>
<feature type="transmembrane region" description="Helical" evidence="1">
    <location>
        <begin position="76"/>
        <end position="98"/>
    </location>
</feature>
<feature type="topological domain" description="Cytoplasmic" evidence="1">
    <location>
        <begin position="99"/>
        <end position="197"/>
    </location>
</feature>
<feature type="transmembrane region" description="Helical" evidence="1">
    <location>
        <begin position="198"/>
        <end position="220"/>
    </location>
</feature>
<feature type="topological domain" description="Extracellular" evidence="1">
    <location>
        <begin position="221"/>
        <end position="252"/>
    </location>
</feature>
<feature type="transmembrane region" description="Helical" evidence="1">
    <location>
        <begin position="253"/>
        <end position="275"/>
    </location>
</feature>
<feature type="topological domain" description="Cytoplasmic" evidence="1">
    <location>
        <begin position="276"/>
        <end position="321"/>
    </location>
</feature>
<feature type="region of interest" description="Disordered" evidence="2">
    <location>
        <begin position="118"/>
        <end position="141"/>
    </location>
</feature>
<feature type="compositionally biased region" description="Gly residues" evidence="2">
    <location>
        <begin position="125"/>
        <end position="137"/>
    </location>
</feature>
<feature type="helix" evidence="6">
    <location>
        <begin position="4"/>
        <end position="14"/>
    </location>
</feature>
<feature type="helix" evidence="5">
    <location>
        <begin position="20"/>
        <end position="45"/>
    </location>
</feature>
<feature type="turn" evidence="5">
    <location>
        <begin position="46"/>
        <end position="52"/>
    </location>
</feature>
<feature type="strand" evidence="5">
    <location>
        <begin position="54"/>
        <end position="56"/>
    </location>
</feature>
<feature type="helix" evidence="5">
    <location>
        <begin position="62"/>
        <end position="70"/>
    </location>
</feature>
<feature type="helix" evidence="5">
    <location>
        <begin position="75"/>
        <end position="100"/>
    </location>
</feature>
<feature type="helix" evidence="5">
    <location>
        <begin position="195"/>
        <end position="221"/>
    </location>
</feature>
<feature type="strand" evidence="5">
    <location>
        <begin position="227"/>
        <end position="231"/>
    </location>
</feature>
<feature type="strand" evidence="4">
    <location>
        <begin position="234"/>
        <end position="238"/>
    </location>
</feature>
<feature type="strand" evidence="5">
    <location>
        <begin position="240"/>
        <end position="243"/>
    </location>
</feature>
<feature type="helix" evidence="5">
    <location>
        <begin position="247"/>
        <end position="275"/>
    </location>
</feature>
<feature type="helix" evidence="5">
    <location>
        <begin position="277"/>
        <end position="281"/>
    </location>
</feature>
<protein>
    <recommendedName>
        <fullName>Gap junction delta-2 protein</fullName>
    </recommendedName>
    <alternativeName>
        <fullName>Connexin-36</fullName>
        <shortName>Cx36</shortName>
    </alternativeName>
    <alternativeName>
        <fullName>Gap junction alpha-9 protein</fullName>
    </alternativeName>
</protein>
<proteinExistence type="evidence at protein level"/>
<organism>
    <name type="scientific">Homo sapiens</name>
    <name type="common">Human</name>
    <dbReference type="NCBI Taxonomy" id="9606"/>
    <lineage>
        <taxon>Eukaryota</taxon>
        <taxon>Metazoa</taxon>
        <taxon>Chordata</taxon>
        <taxon>Craniata</taxon>
        <taxon>Vertebrata</taxon>
        <taxon>Euteleostomi</taxon>
        <taxon>Mammalia</taxon>
        <taxon>Eutheria</taxon>
        <taxon>Euarchontoglires</taxon>
        <taxon>Primates</taxon>
        <taxon>Haplorrhini</taxon>
        <taxon>Catarrhini</taxon>
        <taxon>Hominidae</taxon>
        <taxon>Homo</taxon>
    </lineage>
</organism>
<accession>Q9UKL4</accession>
<accession>Q2M241</accession>
<accession>Q9P2R0</accession>
<reference key="1">
    <citation type="journal article" date="1999" name="J. Neurosci. Res.">
        <title>Structure, chromosomal localization, and brain expression of human Cx36 gene.</title>
        <authorList>
            <person name="Belluardo N."/>
            <person name="Trovato-Salinaro A."/>
            <person name="Mudo G."/>
            <person name="Hurd Y.L."/>
            <person name="Condorelli D.F."/>
        </authorList>
    </citation>
    <scope>NUCLEOTIDE SEQUENCE [GENOMIC DNA]</scope>
</reference>
<reference key="2">
    <citation type="journal article" date="2004" name="Genome Res.">
        <title>The status, quality, and expansion of the NIH full-length cDNA project: the Mammalian Gene Collection (MGC).</title>
        <authorList>
            <consortium name="The MGC Project Team"/>
        </authorList>
    </citation>
    <scope>NUCLEOTIDE SEQUENCE [LARGE SCALE MRNA]</scope>
</reference>
<reference key="3">
    <citation type="journal article" date="2004" name="Mol. Biol. Evol.">
        <title>Human-specific amino acid changes found in 103 protein-coding genes.</title>
        <authorList>
            <person name="Kitano T."/>
            <person name="Liu Y.-H."/>
            <person name="Ueda S."/>
            <person name="Saitou N."/>
        </authorList>
    </citation>
    <scope>NUCLEOTIDE SEQUENCE [GENOMIC DNA] OF 59-295</scope>
</reference>